<accession>A4VJA8</accession>
<dbReference type="EMBL" id="CP000304">
    <property type="protein sequence ID" value="ABP79059.1"/>
    <property type="molecule type" value="Genomic_DNA"/>
</dbReference>
<dbReference type="RefSeq" id="WP_011912541.1">
    <property type="nucleotide sequence ID" value="NC_009434.1"/>
</dbReference>
<dbReference type="SMR" id="A4VJA8"/>
<dbReference type="KEGG" id="psa:PST_1364"/>
<dbReference type="eggNOG" id="COG3100">
    <property type="taxonomic scope" value="Bacteria"/>
</dbReference>
<dbReference type="HOGENOM" id="CLU_155118_2_0_6"/>
<dbReference type="Proteomes" id="UP000000233">
    <property type="component" value="Chromosome"/>
</dbReference>
<dbReference type="Gene3D" id="3.10.510.20">
    <property type="entry name" value="YcgL domain"/>
    <property type="match status" value="1"/>
</dbReference>
<dbReference type="HAMAP" id="MF_01866">
    <property type="entry name" value="UPF0745"/>
    <property type="match status" value="1"/>
</dbReference>
<dbReference type="InterPro" id="IPR038068">
    <property type="entry name" value="YcgL-like_sf"/>
</dbReference>
<dbReference type="InterPro" id="IPR027354">
    <property type="entry name" value="YcgL_dom"/>
</dbReference>
<dbReference type="PANTHER" id="PTHR38109">
    <property type="entry name" value="PROTEIN YCGL"/>
    <property type="match status" value="1"/>
</dbReference>
<dbReference type="PANTHER" id="PTHR38109:SF1">
    <property type="entry name" value="PROTEIN YCGL"/>
    <property type="match status" value="1"/>
</dbReference>
<dbReference type="Pfam" id="PF05166">
    <property type="entry name" value="YcgL"/>
    <property type="match status" value="1"/>
</dbReference>
<dbReference type="SUPFAM" id="SSF160191">
    <property type="entry name" value="YcgL-like"/>
    <property type="match status" value="1"/>
</dbReference>
<dbReference type="PROSITE" id="PS51648">
    <property type="entry name" value="YCGL"/>
    <property type="match status" value="1"/>
</dbReference>
<name>Y1364_STUS1</name>
<proteinExistence type="inferred from homology"/>
<keyword id="KW-1185">Reference proteome</keyword>
<organism>
    <name type="scientific">Stutzerimonas stutzeri (strain A1501)</name>
    <name type="common">Pseudomonas stutzeri</name>
    <dbReference type="NCBI Taxonomy" id="379731"/>
    <lineage>
        <taxon>Bacteria</taxon>
        <taxon>Pseudomonadati</taxon>
        <taxon>Pseudomonadota</taxon>
        <taxon>Gammaproteobacteria</taxon>
        <taxon>Pseudomonadales</taxon>
        <taxon>Pseudomonadaceae</taxon>
        <taxon>Stutzerimonas</taxon>
    </lineage>
</organism>
<feature type="chain" id="PRO_0000375339" description="YcgL domain-containing protein PST_1364">
    <location>
        <begin position="1"/>
        <end position="97"/>
    </location>
</feature>
<feature type="domain" description="YcgL" evidence="1">
    <location>
        <begin position="3"/>
        <end position="87"/>
    </location>
</feature>
<reference key="1">
    <citation type="journal article" date="2008" name="Proc. Natl. Acad. Sci. U.S.A.">
        <title>Nitrogen fixation island and rhizosphere competence traits in the genome of root-associated Pseudomonas stutzeri A1501.</title>
        <authorList>
            <person name="Yan Y."/>
            <person name="Yang J."/>
            <person name="Dou Y."/>
            <person name="Chen M."/>
            <person name="Ping S."/>
            <person name="Peng J."/>
            <person name="Lu W."/>
            <person name="Zhang W."/>
            <person name="Yao Z."/>
            <person name="Li H."/>
            <person name="Liu W."/>
            <person name="He S."/>
            <person name="Geng L."/>
            <person name="Zhang X."/>
            <person name="Yang F."/>
            <person name="Yu H."/>
            <person name="Zhan Y."/>
            <person name="Li D."/>
            <person name="Lin Z."/>
            <person name="Wang Y."/>
            <person name="Elmerich C."/>
            <person name="Lin M."/>
            <person name="Jin Q."/>
        </authorList>
    </citation>
    <scope>NUCLEOTIDE SEQUENCE [LARGE SCALE GENOMIC DNA]</scope>
    <source>
        <strain>A1501</strain>
    </source>
</reference>
<gene>
    <name type="ordered locus">PST_1364</name>
</gene>
<protein>
    <recommendedName>
        <fullName evidence="1">YcgL domain-containing protein PST_1364</fullName>
    </recommendedName>
</protein>
<sequence length="97" mass="11171">MKLICSIYKSPRKDGMYLYVDKRDALKRVPEGLLAAFGAPQLAFELVLTPERQLAREDINKVLANIEAQGYHLQMPPAEDEYIEHLPEELLRMNDPM</sequence>
<evidence type="ECO:0000255" key="1">
    <source>
        <dbReference type="HAMAP-Rule" id="MF_01866"/>
    </source>
</evidence>